<sequence>MTLQESDKFATKAIHAGEHVDVHGSVIEPISLSTTFKQSSPANPIGTYEYSRSQNPNRENLERAVAALENAQYGLAFSSGSATTATILQSLPQGSHAVSIGDVYGGTHRYFTKVANAHGVETSFTNDLLNDLPQLIKENTKLVWIETPTNPTLKVTDIQKVADLIKKHAAGQDVILVVDNTFLSPYISNPLNFGADIVVHSATKYINGHSDVVLGVLATNNKPLYERLQFLQNAIGAIPSPFDAWLTHRGLKTLHLRVRQAALSANKIAEFLAADKENVVAVNYPGLKTHPNYDVVLKQHRDALGGGMISFRIKGGAEAASKFASSTRLFTLAESLGGIESLLEVPAVMTHGGIPKEAREASGVFDDLVRISVGIEDTDDLLEDIKQALKQATN</sequence>
<name>CYS3_YEAST</name>
<organism>
    <name type="scientific">Saccharomyces cerevisiae (strain ATCC 204508 / S288c)</name>
    <name type="common">Baker's yeast</name>
    <dbReference type="NCBI Taxonomy" id="559292"/>
    <lineage>
        <taxon>Eukaryota</taxon>
        <taxon>Fungi</taxon>
        <taxon>Dikarya</taxon>
        <taxon>Ascomycota</taxon>
        <taxon>Saccharomycotina</taxon>
        <taxon>Saccharomycetes</taxon>
        <taxon>Saccharomycetales</taxon>
        <taxon>Saccharomycetaceae</taxon>
        <taxon>Saccharomyces</taxon>
    </lineage>
</organism>
<dbReference type="EC" id="4.4.1.1" evidence="6 7 8"/>
<dbReference type="EMBL" id="L05146">
    <property type="protein sequence ID" value="AAC04945.1"/>
    <property type="molecule type" value="Genomic_DNA"/>
</dbReference>
<dbReference type="EMBL" id="D14135">
    <property type="protein sequence ID" value="BAA03190.1"/>
    <property type="molecule type" value="Genomic_DNA"/>
</dbReference>
<dbReference type="EMBL" id="BK006935">
    <property type="protein sequence ID" value="DAA06976.1"/>
    <property type="molecule type" value="Genomic_DNA"/>
</dbReference>
<dbReference type="PIR" id="S31228">
    <property type="entry name" value="S31228"/>
</dbReference>
<dbReference type="RefSeq" id="NP_009390.1">
    <property type="nucleotide sequence ID" value="NM_001178157.1"/>
</dbReference>
<dbReference type="PDB" id="1N8P">
    <property type="method" value="X-ray"/>
    <property type="resolution" value="2.60 A"/>
    <property type="chains" value="A/B/C/D=2-394"/>
</dbReference>
<dbReference type="PDBsum" id="1N8P"/>
<dbReference type="SMR" id="P31373"/>
<dbReference type="BioGRID" id="31754">
    <property type="interactions" value="246"/>
</dbReference>
<dbReference type="DIP" id="DIP-4440N"/>
<dbReference type="FunCoup" id="P31373">
    <property type="interactions" value="615"/>
</dbReference>
<dbReference type="IntAct" id="P31373">
    <property type="interactions" value="9"/>
</dbReference>
<dbReference type="MINT" id="P31373"/>
<dbReference type="STRING" id="4932.YAL012W"/>
<dbReference type="iPTMnet" id="P31373"/>
<dbReference type="PaxDb" id="4932-YAL012W"/>
<dbReference type="PeptideAtlas" id="P31373"/>
<dbReference type="EnsemblFungi" id="YAL012W_mRNA">
    <property type="protein sequence ID" value="YAL012W"/>
    <property type="gene ID" value="YAL012W"/>
</dbReference>
<dbReference type="GeneID" id="851221"/>
<dbReference type="KEGG" id="sce:YAL012W"/>
<dbReference type="AGR" id="SGD:S000000010"/>
<dbReference type="SGD" id="S000000010">
    <property type="gene designation" value="CYS3"/>
</dbReference>
<dbReference type="VEuPathDB" id="FungiDB:YAL012W"/>
<dbReference type="eggNOG" id="KOG0053">
    <property type="taxonomic scope" value="Eukaryota"/>
</dbReference>
<dbReference type="GeneTree" id="ENSGT00390000000312"/>
<dbReference type="HOGENOM" id="CLU_018986_2_3_1"/>
<dbReference type="InParanoid" id="P31373"/>
<dbReference type="OMA" id="YKQDGVG"/>
<dbReference type="OrthoDB" id="3512640at2759"/>
<dbReference type="BioCyc" id="MetaCyc:YAL012W-MONOMER"/>
<dbReference type="BioCyc" id="YEAST:YAL012W-MONOMER"/>
<dbReference type="BRENDA" id="4.4.1.1">
    <property type="organism ID" value="984"/>
</dbReference>
<dbReference type="Reactome" id="R-SCE-1614558">
    <property type="pathway name" value="Degradation of cysteine and homocysteine"/>
</dbReference>
<dbReference type="Reactome" id="R-SCE-1614603">
    <property type="pathway name" value="Cysteine formation from homocysteine"/>
</dbReference>
<dbReference type="UniPathway" id="UPA00136">
    <property type="reaction ID" value="UER00202"/>
</dbReference>
<dbReference type="BioGRID-ORCS" id="851221">
    <property type="hits" value="9 hits in 10 CRISPR screens"/>
</dbReference>
<dbReference type="EvolutionaryTrace" id="P31373"/>
<dbReference type="PRO" id="PR:P31373"/>
<dbReference type="Proteomes" id="UP000002311">
    <property type="component" value="Chromosome I"/>
</dbReference>
<dbReference type="RNAct" id="P31373">
    <property type="molecule type" value="protein"/>
</dbReference>
<dbReference type="GO" id="GO:0005737">
    <property type="term" value="C:cytoplasm"/>
    <property type="evidence" value="ECO:0007005"/>
    <property type="project" value="SGD"/>
</dbReference>
<dbReference type="GO" id="GO:0005634">
    <property type="term" value="C:nucleus"/>
    <property type="evidence" value="ECO:0007005"/>
    <property type="project" value="SGD"/>
</dbReference>
<dbReference type="GO" id="GO:0004123">
    <property type="term" value="F:cystathionine gamma-lyase activity"/>
    <property type="evidence" value="ECO:0000314"/>
    <property type="project" value="SGD"/>
</dbReference>
<dbReference type="GO" id="GO:0047804">
    <property type="term" value="F:cysteine-S-conjugate beta-lyase activity"/>
    <property type="evidence" value="ECO:0000314"/>
    <property type="project" value="SGD"/>
</dbReference>
<dbReference type="GO" id="GO:0030170">
    <property type="term" value="F:pyridoxal phosphate binding"/>
    <property type="evidence" value="ECO:0000318"/>
    <property type="project" value="GO_Central"/>
</dbReference>
<dbReference type="GO" id="GO:0019344">
    <property type="term" value="P:cysteine biosynthetic process"/>
    <property type="evidence" value="ECO:0000315"/>
    <property type="project" value="SGD"/>
</dbReference>
<dbReference type="GO" id="GO:0019343">
    <property type="term" value="P:cysteine biosynthetic process via cystathionine"/>
    <property type="evidence" value="ECO:0000315"/>
    <property type="project" value="SGD"/>
</dbReference>
<dbReference type="GO" id="GO:1904828">
    <property type="term" value="P:positive regulation of hydrogen sulfide biosynthetic process"/>
    <property type="evidence" value="ECO:0000314"/>
    <property type="project" value="SGD"/>
</dbReference>
<dbReference type="GO" id="GO:0019346">
    <property type="term" value="P:transsulfuration"/>
    <property type="evidence" value="ECO:0000315"/>
    <property type="project" value="SGD"/>
</dbReference>
<dbReference type="CDD" id="cd00614">
    <property type="entry name" value="CGS_like"/>
    <property type="match status" value="1"/>
</dbReference>
<dbReference type="FunFam" id="3.40.640.10:FF:000043">
    <property type="entry name" value="Cystathionine gamma-lyase"/>
    <property type="match status" value="1"/>
</dbReference>
<dbReference type="FunFam" id="3.90.1150.10:FF:000008">
    <property type="entry name" value="Cystathionine gamma-synthase"/>
    <property type="match status" value="1"/>
</dbReference>
<dbReference type="Gene3D" id="3.90.1150.10">
    <property type="entry name" value="Aspartate Aminotransferase, domain 1"/>
    <property type="match status" value="1"/>
</dbReference>
<dbReference type="Gene3D" id="3.40.640.10">
    <property type="entry name" value="Type I PLP-dependent aspartate aminotransferase-like (Major domain)"/>
    <property type="match status" value="1"/>
</dbReference>
<dbReference type="InterPro" id="IPR000277">
    <property type="entry name" value="Cys/Met-Metab_PyrdxlP-dep_enz"/>
</dbReference>
<dbReference type="InterPro" id="IPR054542">
    <property type="entry name" value="Cys_met_metab_PP"/>
</dbReference>
<dbReference type="InterPro" id="IPR015424">
    <property type="entry name" value="PyrdxlP-dep_Trfase"/>
</dbReference>
<dbReference type="InterPro" id="IPR015421">
    <property type="entry name" value="PyrdxlP-dep_Trfase_major"/>
</dbReference>
<dbReference type="InterPro" id="IPR015422">
    <property type="entry name" value="PyrdxlP-dep_Trfase_small"/>
</dbReference>
<dbReference type="PANTHER" id="PTHR11808:SF15">
    <property type="entry name" value="CYSTATHIONINE GAMMA-LYASE"/>
    <property type="match status" value="1"/>
</dbReference>
<dbReference type="PANTHER" id="PTHR11808">
    <property type="entry name" value="TRANS-SULFURATION ENZYME FAMILY MEMBER"/>
    <property type="match status" value="1"/>
</dbReference>
<dbReference type="Pfam" id="PF01053">
    <property type="entry name" value="Cys_Met_Meta_PP"/>
    <property type="match status" value="1"/>
</dbReference>
<dbReference type="PIRSF" id="PIRSF001434">
    <property type="entry name" value="CGS"/>
    <property type="match status" value="1"/>
</dbReference>
<dbReference type="SUPFAM" id="SSF53383">
    <property type="entry name" value="PLP-dependent transferases"/>
    <property type="match status" value="1"/>
</dbReference>
<dbReference type="PROSITE" id="PS00868">
    <property type="entry name" value="CYS_MET_METAB_PP"/>
    <property type="match status" value="1"/>
</dbReference>
<gene>
    <name evidence="9" type="primary">CYS3</name>
    <name evidence="9" type="synonym">CYI1</name>
    <name type="synonym">STR1</name>
    <name type="ordered locus">YAL012W</name>
    <name type="ORF">FUN35</name>
</gene>
<feature type="initiator methionine" description="Removed" evidence="8">
    <location>
        <position position="1"/>
    </location>
</feature>
<feature type="chain" id="PRO_0000114754" description="Cystathionine gamma-lyase">
    <location>
        <begin position="2"/>
        <end position="394"/>
    </location>
</feature>
<feature type="region of interest" description="Disordered" evidence="2">
    <location>
        <begin position="37"/>
        <end position="56"/>
    </location>
</feature>
<feature type="binding site" evidence="1">
    <location>
        <position position="52"/>
    </location>
    <ligand>
        <name>substrate</name>
    </ligand>
</feature>
<feature type="binding site" evidence="1">
    <location>
        <position position="104"/>
    </location>
    <ligand>
        <name>substrate</name>
    </ligand>
</feature>
<feature type="binding site" evidence="1">
    <location>
        <position position="109"/>
    </location>
    <ligand>
        <name>substrate</name>
    </ligand>
</feature>
<feature type="binding site" evidence="1">
    <location>
        <position position="334"/>
    </location>
    <ligand>
        <name>substrate</name>
    </ligand>
</feature>
<feature type="modified residue" description="N6-(pyridoxal phosphate)lysine" evidence="1">
    <location>
        <position position="204"/>
    </location>
</feature>
<feature type="modified residue" description="Phosphoserine" evidence="12 13">
    <location>
        <position position="362"/>
    </location>
</feature>
<feature type="helix" evidence="14">
    <location>
        <begin position="9"/>
        <end position="15"/>
    </location>
</feature>
<feature type="strand" evidence="14">
    <location>
        <begin position="38"/>
        <end position="47"/>
    </location>
</feature>
<feature type="turn" evidence="14">
    <location>
        <begin position="51"/>
        <end position="53"/>
    </location>
</feature>
<feature type="helix" evidence="14">
    <location>
        <begin position="56"/>
        <end position="68"/>
    </location>
</feature>
<feature type="strand" evidence="14">
    <location>
        <begin position="72"/>
        <end position="78"/>
    </location>
</feature>
<feature type="helix" evidence="14">
    <location>
        <begin position="80"/>
        <end position="89"/>
    </location>
</feature>
<feature type="strand" evidence="14">
    <location>
        <begin position="96"/>
        <end position="102"/>
    </location>
</feature>
<feature type="helix" evidence="14">
    <location>
        <begin position="105"/>
        <end position="113"/>
    </location>
</feature>
<feature type="turn" evidence="14">
    <location>
        <begin position="116"/>
        <end position="118"/>
    </location>
</feature>
<feature type="strand" evidence="14">
    <location>
        <begin position="123"/>
        <end position="127"/>
    </location>
</feature>
<feature type="helix" evidence="14">
    <location>
        <begin position="128"/>
        <end position="135"/>
    </location>
</feature>
<feature type="strand" evidence="14">
    <location>
        <begin position="138"/>
        <end position="145"/>
    </location>
</feature>
<feature type="turn" evidence="14">
    <location>
        <begin position="150"/>
        <end position="152"/>
    </location>
</feature>
<feature type="helix" evidence="14">
    <location>
        <begin position="158"/>
        <end position="168"/>
    </location>
</feature>
<feature type="turn" evidence="14">
    <location>
        <begin position="169"/>
        <end position="173"/>
    </location>
</feature>
<feature type="strand" evidence="14">
    <location>
        <begin position="175"/>
        <end position="179"/>
    </location>
</feature>
<feature type="turn" evidence="14">
    <location>
        <begin position="181"/>
        <end position="183"/>
    </location>
</feature>
<feature type="helix" evidence="14">
    <location>
        <begin position="184"/>
        <end position="187"/>
    </location>
</feature>
<feature type="helix" evidence="14">
    <location>
        <begin position="190"/>
        <end position="193"/>
    </location>
</feature>
<feature type="strand" evidence="14">
    <location>
        <begin position="196"/>
        <end position="201"/>
    </location>
</feature>
<feature type="turn" evidence="14">
    <location>
        <begin position="202"/>
        <end position="207"/>
    </location>
</feature>
<feature type="strand" evidence="14">
    <location>
        <begin position="215"/>
        <end position="220"/>
    </location>
</feature>
<feature type="helix" evidence="14">
    <location>
        <begin position="222"/>
        <end position="235"/>
    </location>
</feature>
<feature type="helix" evidence="14">
    <location>
        <begin position="241"/>
        <end position="251"/>
    </location>
</feature>
<feature type="helix" evidence="14">
    <location>
        <begin position="254"/>
        <end position="272"/>
    </location>
</feature>
<feature type="turn" evidence="14">
    <location>
        <begin position="276"/>
        <end position="278"/>
    </location>
</feature>
<feature type="strand" evidence="14">
    <location>
        <begin position="279"/>
        <end position="283"/>
    </location>
</feature>
<feature type="helix" evidence="14">
    <location>
        <begin position="293"/>
        <end position="299"/>
    </location>
</feature>
<feature type="helix" evidence="14">
    <location>
        <begin position="301"/>
        <end position="303"/>
    </location>
</feature>
<feature type="strand" evidence="14">
    <location>
        <begin position="307"/>
        <end position="315"/>
    </location>
</feature>
<feature type="helix" evidence="14">
    <location>
        <begin position="317"/>
        <end position="326"/>
    </location>
</feature>
<feature type="strand" evidence="14">
    <location>
        <begin position="328"/>
        <end position="332"/>
    </location>
</feature>
<feature type="strand" evidence="14">
    <location>
        <begin position="342"/>
        <end position="344"/>
    </location>
</feature>
<feature type="turn" evidence="14">
    <location>
        <begin position="346"/>
        <end position="350"/>
    </location>
</feature>
<feature type="turn" evidence="14">
    <location>
        <begin position="356"/>
        <end position="360"/>
    </location>
</feature>
<feature type="strand" evidence="14">
    <location>
        <begin position="361"/>
        <end position="363"/>
    </location>
</feature>
<feature type="strand" evidence="14">
    <location>
        <begin position="368"/>
        <end position="372"/>
    </location>
</feature>
<feature type="helix" evidence="14">
    <location>
        <begin position="378"/>
        <end position="393"/>
    </location>
</feature>
<protein>
    <recommendedName>
        <fullName>Cystathionine gamma-lyase</fullName>
        <shortName evidence="9">gamma-CTLase</shortName>
        <ecNumber evidence="6 7 8">4.4.1.1</ecNumber>
    </recommendedName>
    <alternativeName>
        <fullName>Gamma-cystathionase</fullName>
    </alternativeName>
    <alternativeName>
        <fullName>Sulfur transfer protein 1</fullName>
    </alternativeName>
</protein>
<keyword id="KW-0002">3D-structure</keyword>
<keyword id="KW-0028">Amino-acid biosynthesis</keyword>
<keyword id="KW-0198">Cysteine biosynthesis</keyword>
<keyword id="KW-0963">Cytoplasm</keyword>
<keyword id="KW-0903">Direct protein sequencing</keyword>
<keyword id="KW-0456">Lyase</keyword>
<keyword id="KW-0597">Phosphoprotein</keyword>
<keyword id="KW-0663">Pyridoxal phosphate</keyword>
<keyword id="KW-1185">Reference proteome</keyword>
<comment type="function">
    <text evidence="7 11">Catalyzes the production of cysteine from cystathionine in the reverse transsulfuration pathway for the biosynthesis of sulfur-containing amino acids cysteine and methionine. In this pathway, homocysteine sulfur is converted to cysteine sulfur (Probable). Also has cystathionine beta-lyase and cystathionine gamma-synthase activities in vitro. Cystathionine beta-lyase may be physiological, while cystathionine gamma-synthase activity is not, as the required substrate O-succinyl-L-homoserine(OSH) does not occur naturally in S.cerevisiae (PubMed:8335636).</text>
</comment>
<comment type="catalytic activity">
    <reaction evidence="6 7 8">
        <text>L,L-cystathionine + H2O = 2-oxobutanoate + L-cysteine + NH4(+)</text>
        <dbReference type="Rhea" id="RHEA:14005"/>
        <dbReference type="ChEBI" id="CHEBI:15377"/>
        <dbReference type="ChEBI" id="CHEBI:16763"/>
        <dbReference type="ChEBI" id="CHEBI:28938"/>
        <dbReference type="ChEBI" id="CHEBI:35235"/>
        <dbReference type="ChEBI" id="CHEBI:58161"/>
        <dbReference type="EC" id="4.4.1.1"/>
    </reaction>
    <physiologicalReaction direction="left-to-right" evidence="6 7 8">
        <dbReference type="Rhea" id="RHEA:14006"/>
    </physiologicalReaction>
</comment>
<comment type="cofactor">
    <cofactor evidence="3">
        <name>pyridoxal 5'-phosphate</name>
        <dbReference type="ChEBI" id="CHEBI:597326"/>
    </cofactor>
</comment>
<comment type="biophysicochemical properties">
    <kinetics>
        <KM evidence="7">0.25 mM for cystathionine (for gamma-lyase reaction)</KM>
        <KM evidence="7">0.5 mM for cystathionine (for beta-lyase reaction)</KM>
        <Vmax evidence="7">0.71 umol/min/mg enzyme (for gamma-lyase reaction)</Vmax>
        <Vmax evidence="7">0.42 umol/min/mg enzyme (for beta-lyase reaction)</Vmax>
    </kinetics>
</comment>
<comment type="pathway">
    <text evidence="11">Amino-acid biosynthesis; L-cysteine biosynthesis; L-cysteine from L-homocysteine and L-serine: step 2/2.</text>
</comment>
<comment type="subunit">
    <text evidence="3 7">Homotetramer.</text>
</comment>
<comment type="subcellular location">
    <subcellularLocation>
        <location evidence="4">Cytoplasm</location>
    </subcellularLocation>
</comment>
<comment type="miscellaneous">
    <text evidence="5">Present with 38300 molecules/cell in log phase SD medium.</text>
</comment>
<comment type="similarity">
    <text evidence="10">Belongs to the trans-sulfuration enzymes family.</text>
</comment>
<proteinExistence type="evidence at protein level"/>
<evidence type="ECO:0000250" key="1"/>
<evidence type="ECO:0000256" key="2">
    <source>
        <dbReference type="SAM" id="MobiDB-lite"/>
    </source>
</evidence>
<evidence type="ECO:0000269" key="3">
    <source>
    </source>
</evidence>
<evidence type="ECO:0000269" key="4">
    <source>
    </source>
</evidence>
<evidence type="ECO:0000269" key="5">
    <source>
    </source>
</evidence>
<evidence type="ECO:0000269" key="6">
    <source>
    </source>
</evidence>
<evidence type="ECO:0000269" key="7">
    <source>
    </source>
</evidence>
<evidence type="ECO:0000269" key="8">
    <source>
    </source>
</evidence>
<evidence type="ECO:0000303" key="9">
    <source>
    </source>
</evidence>
<evidence type="ECO:0000305" key="10"/>
<evidence type="ECO:0000305" key="11">
    <source>
    </source>
</evidence>
<evidence type="ECO:0007744" key="12">
    <source>
    </source>
</evidence>
<evidence type="ECO:0007744" key="13">
    <source>
    </source>
</evidence>
<evidence type="ECO:0007829" key="14">
    <source>
        <dbReference type="PDB" id="1N8P"/>
    </source>
</evidence>
<accession>P31373</accession>
<accession>D6VPK6</accession>
<reference key="1">
    <citation type="journal article" date="1992" name="J. Bacteriol.">
        <title>Cloning and characterization of the CYS3 (CYI1) gene of Saccharomyces cerevisiae.</title>
        <authorList>
            <person name="Ono B."/>
            <person name="Tanaka K."/>
            <person name="Naito K."/>
            <person name="Heike C."/>
            <person name="Shinoda S."/>
            <person name="Yamamoto S."/>
            <person name="Ohmori S."/>
            <person name="Oshima T."/>
            <person name="Toh-e A."/>
        </authorList>
    </citation>
    <scope>NUCLEOTIDE SEQUENCE [GENOMIC DNA]</scope>
    <scope>FUNCTION</scope>
    <scope>CATALYTIC ACTIVITY</scope>
</reference>
<reference key="2">
    <citation type="journal article" date="1993" name="J. Bacteriol.">
        <title>Cloning and bacterial expression of the CYS3 gene encoding cystathionine gamma-lyase of Saccharomyces cerevisiae and the physicochemical and enzymatic properties of the protein.</title>
        <authorList>
            <person name="Yamagata S."/>
            <person name="D'Andrea R.J."/>
            <person name="Fujisaki S."/>
            <person name="Isaji M."/>
            <person name="Nakamura K."/>
        </authorList>
    </citation>
    <scope>NUCLEOTIDE SEQUENCE [GENOMIC DNA]</scope>
    <scope>FUNCTION</scope>
    <scope>CATALYTIC ACTIVITY</scope>
    <scope>SUBUNIT</scope>
    <source>
        <strain>DBY939</strain>
    </source>
</reference>
<reference key="3">
    <citation type="journal article" date="1993" name="Yeast">
        <title>Physical localization of yeast CYS3, a gene whose product resembles the rat gamma-cystathionase and Escherichia coli cystathionine gamma-synthase enzymes.</title>
        <authorList>
            <person name="Barton A.B."/>
            <person name="Kaback D.B."/>
            <person name="Clark M.W."/>
            <person name="Keng T."/>
            <person name="Ouellette B.F.F."/>
            <person name="Storms R.K."/>
            <person name="Zeng B."/>
            <person name="Zhong W.W."/>
            <person name="Fortin N."/>
            <person name="Delaney S."/>
            <person name="Bussey H."/>
        </authorList>
    </citation>
    <scope>NUCLEOTIDE SEQUENCE [GENOMIC DNA]</scope>
    <source>
        <strain>ATCC 204511 / S288c / AB972</strain>
    </source>
</reference>
<reference key="4">
    <citation type="journal article" date="1993" name="Genome">
        <title>Sequencing of chromosome I from Saccharomyces cerevisiae: analysis of a 32 kb region between the LTE1 and SPO7 genes.</title>
        <authorList>
            <person name="Ouellette B.F.F."/>
            <person name="Clark M.W."/>
            <person name="Keng T."/>
            <person name="Storms R.K."/>
            <person name="Zhong W.-W."/>
            <person name="Zeng B."/>
            <person name="Fortin N."/>
            <person name="Delaney S."/>
            <person name="Barton A.B."/>
            <person name="Kaback D.B."/>
            <person name="Bussey H."/>
        </authorList>
    </citation>
    <scope>NUCLEOTIDE SEQUENCE [GENOMIC DNA]</scope>
    <source>
        <strain>ATCC 204511 / S288c / AB972</strain>
    </source>
</reference>
<reference key="5">
    <citation type="journal article" date="1995" name="Proc. Natl. Acad. Sci. U.S.A.">
        <title>The nucleotide sequence of chromosome I from Saccharomyces cerevisiae.</title>
        <authorList>
            <person name="Bussey H."/>
            <person name="Kaback D.B."/>
            <person name="Zhong W.-W."/>
            <person name="Vo D.H."/>
            <person name="Clark M.W."/>
            <person name="Fortin N."/>
            <person name="Hall J."/>
            <person name="Ouellette B.F.F."/>
            <person name="Keng T."/>
            <person name="Barton A.B."/>
            <person name="Su Y."/>
            <person name="Davies C.J."/>
            <person name="Storms R.K."/>
        </authorList>
    </citation>
    <scope>NUCLEOTIDE SEQUENCE [LARGE SCALE GENOMIC DNA]</scope>
    <source>
        <strain>ATCC 204508 / S288c</strain>
    </source>
</reference>
<reference key="6">
    <citation type="journal article" date="2014" name="G3 (Bethesda)">
        <title>The reference genome sequence of Saccharomyces cerevisiae: Then and now.</title>
        <authorList>
            <person name="Engel S.R."/>
            <person name="Dietrich F.S."/>
            <person name="Fisk D.G."/>
            <person name="Binkley G."/>
            <person name="Balakrishnan R."/>
            <person name="Costanzo M.C."/>
            <person name="Dwight S.S."/>
            <person name="Hitz B.C."/>
            <person name="Karra K."/>
            <person name="Nash R.S."/>
            <person name="Weng S."/>
            <person name="Wong E.D."/>
            <person name="Lloyd P."/>
            <person name="Skrzypek M.S."/>
            <person name="Miyasato S.R."/>
            <person name="Simison M."/>
            <person name="Cherry J.M."/>
        </authorList>
    </citation>
    <scope>GENOME REANNOTATION</scope>
    <source>
        <strain>ATCC 204508 / S288c</strain>
    </source>
</reference>
<reference key="7">
    <citation type="journal article" date="1993" name="Yeast">
        <title>Cystathionine gamma-lyase of Saccharomyces cerevisiae: structural gene and cystathionine gamma-synthase activity.</title>
        <authorList>
            <person name="Ono B."/>
            <person name="Ishii N."/>
            <person name="Naito K."/>
            <person name="Miyoshi S."/>
            <person name="Shinoda S."/>
            <person name="Yamamoto S."/>
            <person name="Ohmori S."/>
        </authorList>
    </citation>
    <scope>PROTEIN SEQUENCE OF 2-19</scope>
    <scope>FUNCTION</scope>
    <scope>CATALYTIC ACTIVITY</scope>
    <scope>BIOPHYSICOCHEMICAL PROPERTIES</scope>
</reference>
<reference key="8">
    <citation type="journal article" date="2003" name="Nature">
        <title>Global analysis of protein localization in budding yeast.</title>
        <authorList>
            <person name="Huh W.-K."/>
            <person name="Falvo J.V."/>
            <person name="Gerke L.C."/>
            <person name="Carroll A.S."/>
            <person name="Howson R.W."/>
            <person name="Weissman J.S."/>
            <person name="O'Shea E.K."/>
        </authorList>
    </citation>
    <scope>SUBCELLULAR LOCATION [LARGE SCALE ANALYSIS]</scope>
</reference>
<reference key="9">
    <citation type="journal article" date="2003" name="Nature">
        <title>Global analysis of protein expression in yeast.</title>
        <authorList>
            <person name="Ghaemmaghami S."/>
            <person name="Huh W.-K."/>
            <person name="Bower K."/>
            <person name="Howson R.W."/>
            <person name="Belle A."/>
            <person name="Dephoure N."/>
            <person name="O'Shea E.K."/>
            <person name="Weissman J.S."/>
        </authorList>
    </citation>
    <scope>LEVEL OF PROTEIN EXPRESSION [LARGE SCALE ANALYSIS]</scope>
</reference>
<reference key="10">
    <citation type="journal article" date="2008" name="Mol. Cell. Proteomics">
        <title>A multidimensional chromatography technology for in-depth phosphoproteome analysis.</title>
        <authorList>
            <person name="Albuquerque C.P."/>
            <person name="Smolka M.B."/>
            <person name="Payne S.H."/>
            <person name="Bafna V."/>
            <person name="Eng J."/>
            <person name="Zhou H."/>
        </authorList>
    </citation>
    <scope>PHOSPHORYLATION [LARGE SCALE ANALYSIS] AT SER-362</scope>
    <scope>IDENTIFICATION BY MASS SPECTROMETRY [LARGE SCALE ANALYSIS]</scope>
</reference>
<reference key="11">
    <citation type="journal article" date="2009" name="Science">
        <title>Global analysis of Cdk1 substrate phosphorylation sites provides insights into evolution.</title>
        <authorList>
            <person name="Holt L.J."/>
            <person name="Tuch B.B."/>
            <person name="Villen J."/>
            <person name="Johnson A.D."/>
            <person name="Gygi S.P."/>
            <person name="Morgan D.O."/>
        </authorList>
    </citation>
    <scope>PHOSPHORYLATION [LARGE SCALE ANALYSIS] AT SER-362</scope>
    <scope>IDENTIFICATION BY MASS SPECTROMETRY [LARGE SCALE ANALYSIS]</scope>
</reference>
<reference key="12">
    <citation type="journal article" date="2003" name="Biol. Chem.">
        <title>Determinants of enzymatic specificity in the Cys-Met-metabolism PLP-dependent enzymes family: crystal structure of cystathionine gamma-lyase from yeast and intrafamiliar structure comparison.</title>
        <authorList>
            <person name="Messerschmidt A."/>
            <person name="Worbs M."/>
            <person name="Steegborn C."/>
            <person name="Wahl M.C."/>
            <person name="Huber R."/>
            <person name="Laber B."/>
            <person name="Clausen T."/>
        </authorList>
    </citation>
    <scope>X-RAY CRYSTALLOGRAPHY (2.6 ANGSTROMS) OF 2-393 IN COMPLEX WITH PYRIDOXAL PHOSPHATE</scope>
    <scope>COFACTOR</scope>
    <scope>SUBUNIT</scope>
</reference>